<accession>P31385</accession>
<accession>D6VPK5</accession>
<accession>Q86ZS5</accession>
<reference key="1">
    <citation type="journal article" date="1993" name="Genome">
        <title>Sequencing of chromosome I from Saccharomyces cerevisiae: analysis of a 32 kb region between the LTE1 and SPO7 genes.</title>
        <authorList>
            <person name="Ouellette B.F.F."/>
            <person name="Clark M.W."/>
            <person name="Keng T."/>
            <person name="Storms R.K."/>
            <person name="Zhong W.-W."/>
            <person name="Zeng B."/>
            <person name="Fortin N."/>
            <person name="Delaney S."/>
            <person name="Barton A.B."/>
            <person name="Kaback D.B."/>
            <person name="Bussey H."/>
        </authorList>
    </citation>
    <scope>NUCLEOTIDE SEQUENCE [GENOMIC DNA]</scope>
    <source>
        <strain>ATCC 204511 / S288c / AB972</strain>
    </source>
</reference>
<reference key="2">
    <citation type="journal article" date="1994" name="J. Bacteriol.">
        <title>Molecular cloning of chromosome I DNA from Saccharomyces cerevisiae: analysis of the genes in the FUN38-MAK16-SPO7 region.</title>
        <authorList>
            <person name="Barton A.B."/>
            <person name="Kaback D.B."/>
        </authorList>
    </citation>
    <scope>NUCLEOTIDE SEQUENCE [GENOMIC DNA]</scope>
</reference>
<reference key="3">
    <citation type="journal article" date="1995" name="Proc. Natl. Acad. Sci. U.S.A.">
        <title>The nucleotide sequence of chromosome I from Saccharomyces cerevisiae.</title>
        <authorList>
            <person name="Bussey H."/>
            <person name="Kaback D.B."/>
            <person name="Zhong W.-W."/>
            <person name="Vo D.H."/>
            <person name="Clark M.W."/>
            <person name="Fortin N."/>
            <person name="Hall J."/>
            <person name="Ouellette B.F.F."/>
            <person name="Keng T."/>
            <person name="Barton A.B."/>
            <person name="Su Y."/>
            <person name="Davies C.J."/>
            <person name="Storms R.K."/>
        </authorList>
    </citation>
    <scope>NUCLEOTIDE SEQUENCE [LARGE SCALE GENOMIC DNA]</scope>
    <source>
        <strain>ATCC 204508 / S288c</strain>
    </source>
</reference>
<reference key="4">
    <citation type="submission" date="2003-12" db="EMBL/GenBank/DDBJ databases">
        <authorList>
            <person name="Sethuraman A."/>
            <person name="Cherry J.M."/>
        </authorList>
    </citation>
    <scope>SEQUENCE REVISION TO C-TERMINUS</scope>
</reference>
<reference key="5">
    <citation type="journal article" date="2014" name="G3 (Bethesda)">
        <title>The reference genome sequence of Saccharomyces cerevisiae: Then and now.</title>
        <authorList>
            <person name="Engel S.R."/>
            <person name="Dietrich F.S."/>
            <person name="Fisk D.G."/>
            <person name="Binkley G."/>
            <person name="Balakrishnan R."/>
            <person name="Costanzo M.C."/>
            <person name="Dwight S.S."/>
            <person name="Hitz B.C."/>
            <person name="Karra K."/>
            <person name="Nash R.S."/>
            <person name="Weng S."/>
            <person name="Wong E.D."/>
            <person name="Lloyd P."/>
            <person name="Skrzypek M.S."/>
            <person name="Miyasato S.R."/>
            <person name="Simison M."/>
            <person name="Cherry J.M."/>
        </authorList>
    </citation>
    <scope>GENOME REANNOTATION</scope>
    <scope>SEQUENCE REVISION TO 405</scope>
    <source>
        <strain>ATCC 204508 / S288c</strain>
    </source>
</reference>
<reference key="6">
    <citation type="journal article" date="2003" name="Genome Biol.">
        <title>Reinvestigation of the Saccharomyces cerevisiae genome annotation by comparison to the genome of a related fungus: Ashbya gossypii.</title>
        <authorList>
            <person name="Brachat S."/>
            <person name="Dietrich F.S."/>
            <person name="Voegeli S."/>
            <person name="Zhang Z."/>
            <person name="Stuart L."/>
            <person name="Lerch A."/>
            <person name="Gates K."/>
            <person name="Gaffney T.D."/>
            <person name="Philippsen P."/>
        </authorList>
    </citation>
    <scope>NUCLEOTIDE SEQUENCE [GENOMIC DNA] OF 302-361</scope>
    <source>
        <strain>ATCC 204511 / S288c / AB972</strain>
    </source>
</reference>
<reference key="7">
    <citation type="journal article" date="1994" name="Genetics">
        <title>Isolation and characterization of a mutant of Saccharomyces cerevisiae with pleiotropic deficiencies in transcriptional activation and repression.</title>
        <authorList>
            <person name="Lamping E."/>
            <person name="Lueckl J."/>
            <person name="Paltauf F."/>
            <person name="Henry S.A."/>
            <person name="Kohlwein S.D."/>
        </authorList>
    </citation>
    <scope>FUNCTION</scope>
</reference>
<reference key="8">
    <citation type="journal article" date="2005" name="Biochim. Biophys. Acta">
        <title>Stable incorporation of sequence specific repressors Ash1 and Ume6 into the Rpd3L complex.</title>
        <authorList>
            <person name="Carrozza M.J."/>
            <person name="Florens L."/>
            <person name="Swanson S.K."/>
            <person name="Shia W.-J."/>
            <person name="Anderson S."/>
            <person name="Yates J."/>
            <person name="Washburn M.P."/>
            <person name="Workman J.L."/>
        </authorList>
    </citation>
    <scope>IDENTIFICATION IN THE RPD3C(L) COMPLEX</scope>
    <scope>IDENTIFICATION BY MASS SPECTROMETRY</scope>
</reference>
<reference key="9">
    <citation type="journal article" date="2005" name="Cell">
        <title>Cotranscriptional set2 methylation of histone H3 lysine 36 recruits a repressive Rpd3 complex.</title>
        <authorList>
            <person name="Keogh M.-C."/>
            <person name="Kurdistani S.K."/>
            <person name="Morris S.A."/>
            <person name="Ahn S.H."/>
            <person name="Podolny V."/>
            <person name="Collins S.R."/>
            <person name="Schuldiner M."/>
            <person name="Chin K."/>
            <person name="Punna T."/>
            <person name="Thompson N.J."/>
            <person name="Boone C."/>
            <person name="Emili A."/>
            <person name="Weissman J.S."/>
            <person name="Hughes T.R."/>
            <person name="Strahl B.D."/>
            <person name="Grunstein M."/>
            <person name="Greenblatt J.F."/>
            <person name="Buratowski S."/>
            <person name="Krogan N.J."/>
        </authorList>
    </citation>
    <scope>IDENTIFICATION IN THE RPD3C(L) COMPLEX</scope>
    <scope>IDENTIFICATION BY MASS SPECTROMETRY</scope>
</reference>
<reference key="10">
    <citation type="journal article" date="2008" name="Mol. Cell. Proteomics">
        <title>A multidimensional chromatography technology for in-depth phosphoproteome analysis.</title>
        <authorList>
            <person name="Albuquerque C.P."/>
            <person name="Smolka M.B."/>
            <person name="Payne S.H."/>
            <person name="Bafna V."/>
            <person name="Eng J."/>
            <person name="Zhou H."/>
        </authorList>
    </citation>
    <scope>PHOSPHORYLATION [LARGE SCALE ANALYSIS] AT SER-120 AND SER-370</scope>
    <scope>IDENTIFICATION BY MASS SPECTROMETRY [LARGE SCALE ANALYSIS]</scope>
</reference>
<reference key="11">
    <citation type="journal article" date="2009" name="Science">
        <title>Global analysis of Cdk1 substrate phosphorylation sites provides insights into evolution.</title>
        <authorList>
            <person name="Holt L.J."/>
            <person name="Tuch B.B."/>
            <person name="Villen J."/>
            <person name="Johnson A.D."/>
            <person name="Gygi S.P."/>
            <person name="Morgan D.O."/>
        </authorList>
    </citation>
    <scope>PHOSPHORYLATION [LARGE SCALE ANALYSIS] AT SER-56 AND SER-120</scope>
    <scope>IDENTIFICATION BY MASS SPECTROMETRY [LARGE SCALE ANALYSIS]</scope>
</reference>
<proteinExistence type="evidence at protein level"/>
<name>DEP1_YEAST</name>
<keyword id="KW-0002">3D-structure</keyword>
<keyword id="KW-0156">Chromatin regulator</keyword>
<keyword id="KW-0963">Cytoplasm</keyword>
<keyword id="KW-0539">Nucleus</keyword>
<keyword id="KW-0597">Phosphoprotein</keyword>
<keyword id="KW-1185">Reference proteome</keyword>
<keyword id="KW-0678">Repressor</keyword>
<keyword id="KW-0804">Transcription</keyword>
<keyword id="KW-0805">Transcription regulation</keyword>
<sequence>MSQQTPQESEQTTAKEQDLDQESVLSNIDFNTDLNHNLNLSEYCISSDAGTEKMDSDEEKSLANLPELKYAPKLSSLVKQETLTESLKRPHEDEKEAIDEAKKMKVPGENEDESKEEEKSQELEEAIDSKEKSTDARDEQGDEGDNEEENNEEDNENENEHTAPPALVMPSPIEMEEQRMTALKEITDIEYKFAQLRQKLYDNQLVRLQTELQMCLEGSHPELQVYYSKIAAIRDYKLHRAYQRQKYELSCINTETIATRTFIHQDFHKKVTDLRARLLNRTTQTWYDINKERRDMDIVIPDVNYHVPIKLDNKTLSCITGYASAAQLCYPGEPVAEDLACESIEYRYRANPVDKLEVIVDRMRLNNEISDLEGLRKYFHSFPGAPELNPLRDSEINDDFHQWAQ</sequence>
<organism>
    <name type="scientific">Saccharomyces cerevisiae (strain ATCC 204508 / S288c)</name>
    <name type="common">Baker's yeast</name>
    <dbReference type="NCBI Taxonomy" id="559292"/>
    <lineage>
        <taxon>Eukaryota</taxon>
        <taxon>Fungi</taxon>
        <taxon>Dikarya</taxon>
        <taxon>Ascomycota</taxon>
        <taxon>Saccharomycotina</taxon>
        <taxon>Saccharomycetes</taxon>
        <taxon>Saccharomycetales</taxon>
        <taxon>Saccharomycetaceae</taxon>
        <taxon>Saccharomyces</taxon>
    </lineage>
</organism>
<comment type="function">
    <text evidence="4">Component of the RPD3C(L) histone deacetylase complex (HDAC) responsible for the deacetylation of lysine residues on the N-terminal part of the core histones (H2A, H2B, H3 and H4). Histone deacetylation gives a tag for epigenetic repression and plays an important role in transcriptional regulation, cell cycle progression and developmental events.</text>
</comment>
<comment type="subunit">
    <text evidence="2 3">Component of the RPD3C(L) complex composed of at least ASH1, CTI6, DEP1, PHO23, RPD3, RXT2, RXT3, SAP30, SDS3, SIN3, UME1 and UME6.</text>
</comment>
<comment type="interaction">
    <interactant intactId="EBI-5755">
        <id>P31385</id>
    </interactant>
    <interactant intactId="EBI-3027">
        <id>P34233</id>
        <label>ASH1</label>
    </interactant>
    <organismsDiffer>false</organismsDiffer>
    <experiments>2</experiments>
</comment>
<comment type="subcellular location">
    <subcellularLocation>
        <location>Cytoplasm</location>
    </subcellularLocation>
    <subcellularLocation>
        <location>Nucleus</location>
    </subcellularLocation>
</comment>
<comment type="sequence caution" evidence="5">
    <conflict type="frameshift">
        <sequence resource="EMBL-CDS" id="AAC04944"/>
    </conflict>
</comment>
<feature type="chain" id="PRO_0000079864" description="Transcriptional regulatory protein DEP1">
    <location>
        <begin position="1"/>
        <end position="405"/>
    </location>
</feature>
<feature type="region of interest" description="Disordered" evidence="1">
    <location>
        <begin position="1"/>
        <end position="26"/>
    </location>
</feature>
<feature type="region of interest" description="Disordered" evidence="1">
    <location>
        <begin position="49"/>
        <end position="171"/>
    </location>
</feature>
<feature type="compositionally biased region" description="Low complexity" evidence="1">
    <location>
        <begin position="1"/>
        <end position="12"/>
    </location>
</feature>
<feature type="compositionally biased region" description="Basic and acidic residues" evidence="1">
    <location>
        <begin position="86"/>
        <end position="108"/>
    </location>
</feature>
<feature type="compositionally biased region" description="Basic and acidic residues" evidence="1">
    <location>
        <begin position="116"/>
        <end position="139"/>
    </location>
</feature>
<feature type="compositionally biased region" description="Acidic residues" evidence="1">
    <location>
        <begin position="140"/>
        <end position="157"/>
    </location>
</feature>
<feature type="modified residue" description="Phosphoserine" evidence="7">
    <location>
        <position position="56"/>
    </location>
</feature>
<feature type="modified residue" description="Phosphoserine" evidence="6 7">
    <location>
        <position position="120"/>
    </location>
</feature>
<feature type="modified residue" description="Phosphoserine" evidence="6">
    <location>
        <position position="370"/>
    </location>
</feature>
<feature type="helix" evidence="8">
    <location>
        <begin position="172"/>
        <end position="215"/>
    </location>
</feature>
<feature type="turn" evidence="8">
    <location>
        <begin position="216"/>
        <end position="218"/>
    </location>
</feature>
<feature type="turn" evidence="8">
    <location>
        <begin position="221"/>
        <end position="225"/>
    </location>
</feature>
<feature type="turn" evidence="8">
    <location>
        <begin position="228"/>
        <end position="230"/>
    </location>
</feature>
<feature type="helix" evidence="8">
    <location>
        <begin position="231"/>
        <end position="294"/>
    </location>
</feature>
<feature type="turn" evidence="8">
    <location>
        <begin position="315"/>
        <end position="321"/>
    </location>
</feature>
<feature type="helix" evidence="8">
    <location>
        <begin position="337"/>
        <end position="341"/>
    </location>
</feature>
<feature type="strand" evidence="8">
    <location>
        <begin position="348"/>
        <end position="350"/>
    </location>
</feature>
<feature type="helix" evidence="8">
    <location>
        <begin position="356"/>
        <end position="379"/>
    </location>
</feature>
<feature type="helix" evidence="8">
    <location>
        <begin position="394"/>
        <end position="402"/>
    </location>
</feature>
<dbReference type="EMBL" id="L05146">
    <property type="protein sequence ID" value="AAC04944.2"/>
    <property type="status" value="ALT_FRAME"/>
    <property type="molecule type" value="Genomic_DNA"/>
</dbReference>
<dbReference type="EMBL" id="AY260888">
    <property type="protein sequence ID" value="AAP21756.1"/>
    <property type="molecule type" value="Genomic_DNA"/>
</dbReference>
<dbReference type="EMBL" id="BK006935">
    <property type="protein sequence ID" value="DAA06975.2"/>
    <property type="molecule type" value="Genomic_DNA"/>
</dbReference>
<dbReference type="PIR" id="S36721">
    <property type="entry name" value="S36721"/>
</dbReference>
<dbReference type="RefSeq" id="NP_009389.3">
    <property type="nucleotide sequence ID" value="NM_001178158.2"/>
</dbReference>
<dbReference type="PDB" id="8GA8">
    <property type="method" value="EM"/>
    <property type="resolution" value="3.50 A"/>
    <property type="chains" value="G=1-405"/>
</dbReference>
<dbReference type="PDB" id="8HPO">
    <property type="method" value="EM"/>
    <property type="resolution" value="2.60 A"/>
    <property type="chains" value="H=1-405"/>
</dbReference>
<dbReference type="PDBsum" id="8GA8"/>
<dbReference type="PDBsum" id="8HPO"/>
<dbReference type="EMDB" id="EMD-29892"/>
<dbReference type="EMDB" id="EMD-34935"/>
<dbReference type="SMR" id="P31385"/>
<dbReference type="BioGRID" id="31753">
    <property type="interactions" value="895"/>
</dbReference>
<dbReference type="ComplexPortal" id="CPX-1852">
    <property type="entry name" value="RPD3L histone deacetylase complex"/>
</dbReference>
<dbReference type="DIP" id="DIP-5922N"/>
<dbReference type="FunCoup" id="P31385">
    <property type="interactions" value="200"/>
</dbReference>
<dbReference type="IntAct" id="P31385">
    <property type="interactions" value="10"/>
</dbReference>
<dbReference type="MINT" id="P31385"/>
<dbReference type="STRING" id="4932.YAL013W"/>
<dbReference type="iPTMnet" id="P31385"/>
<dbReference type="PaxDb" id="4932-YAL013W"/>
<dbReference type="PeptideAtlas" id="P31385"/>
<dbReference type="EnsemblFungi" id="YAL013W_mRNA">
    <property type="protein sequence ID" value="YAL013W"/>
    <property type="gene ID" value="YAL013W"/>
</dbReference>
<dbReference type="GeneID" id="851220"/>
<dbReference type="KEGG" id="sce:YAL013W"/>
<dbReference type="AGR" id="SGD:S000000011"/>
<dbReference type="SGD" id="S000000011">
    <property type="gene designation" value="DEP1"/>
</dbReference>
<dbReference type="VEuPathDB" id="FungiDB:YAL013W"/>
<dbReference type="eggNOG" id="ENOG502S36P">
    <property type="taxonomic scope" value="Eukaryota"/>
</dbReference>
<dbReference type="HOGENOM" id="CLU_028822_0_0_1"/>
<dbReference type="InParanoid" id="P31385"/>
<dbReference type="OMA" id="ATRCFIH"/>
<dbReference type="OrthoDB" id="20886at2759"/>
<dbReference type="BioCyc" id="YEAST:G3O-28825-MONOMER"/>
<dbReference type="Reactome" id="R-SCE-3214815">
    <property type="pathway name" value="HDACs deacetylate histones"/>
</dbReference>
<dbReference type="Reactome" id="R-SCE-5689880">
    <property type="pathway name" value="Ub-specific processing proteases"/>
</dbReference>
<dbReference type="BioGRID-ORCS" id="851220">
    <property type="hits" value="6 hits in 10 CRISPR screens"/>
</dbReference>
<dbReference type="PRO" id="PR:P31385"/>
<dbReference type="Proteomes" id="UP000002311">
    <property type="component" value="Chromosome I"/>
</dbReference>
<dbReference type="RNAct" id="P31385">
    <property type="molecule type" value="protein"/>
</dbReference>
<dbReference type="GO" id="GO:0005739">
    <property type="term" value="C:mitochondrion"/>
    <property type="evidence" value="ECO:0000314"/>
    <property type="project" value="SGD"/>
</dbReference>
<dbReference type="GO" id="GO:0005634">
    <property type="term" value="C:nucleus"/>
    <property type="evidence" value="ECO:0000314"/>
    <property type="project" value="SGD"/>
</dbReference>
<dbReference type="GO" id="GO:0033698">
    <property type="term" value="C:Rpd3L complex"/>
    <property type="evidence" value="ECO:0000314"/>
    <property type="project" value="SGD"/>
</dbReference>
<dbReference type="GO" id="GO:0070210">
    <property type="term" value="C:Rpd3L-Expanded complex"/>
    <property type="evidence" value="ECO:0007005"/>
    <property type="project" value="SGD"/>
</dbReference>
<dbReference type="GO" id="GO:0070822">
    <property type="term" value="C:Sin3-type complex"/>
    <property type="evidence" value="ECO:0000318"/>
    <property type="project" value="GO_Central"/>
</dbReference>
<dbReference type="GO" id="GO:0042826">
    <property type="term" value="F:histone deacetylase binding"/>
    <property type="evidence" value="ECO:0000318"/>
    <property type="project" value="GO_Central"/>
</dbReference>
<dbReference type="GO" id="GO:0034605">
    <property type="term" value="P:cellular response to heat"/>
    <property type="evidence" value="ECO:0000315"/>
    <property type="project" value="SGD"/>
</dbReference>
<dbReference type="GO" id="GO:1900089">
    <property type="term" value="P:negative regulation of inositol biosynthetic process"/>
    <property type="evidence" value="ECO:0000315"/>
    <property type="project" value="SGD"/>
</dbReference>
<dbReference type="GO" id="GO:2001246">
    <property type="term" value="P:negative regulation of phosphatidylcholine biosynthetic process"/>
    <property type="evidence" value="ECO:0000315"/>
    <property type="project" value="SGD"/>
</dbReference>
<dbReference type="GO" id="GO:1900469">
    <property type="term" value="P:negative regulation of phosphatidylserine biosynthetic process"/>
    <property type="evidence" value="ECO:0000315"/>
    <property type="project" value="SGD"/>
</dbReference>
<dbReference type="GO" id="GO:0061188">
    <property type="term" value="P:negative regulation of rDNA heterochromatin formation"/>
    <property type="evidence" value="ECO:0000315"/>
    <property type="project" value="SGD"/>
</dbReference>
<dbReference type="GO" id="GO:0061186">
    <property type="term" value="P:negative regulation of silent mating-type cassette heterochromatin formation"/>
    <property type="evidence" value="ECO:0000315"/>
    <property type="project" value="SGD"/>
</dbReference>
<dbReference type="GO" id="GO:0000122">
    <property type="term" value="P:negative regulation of transcription by RNA polymerase II"/>
    <property type="evidence" value="ECO:0000315"/>
    <property type="project" value="SGD"/>
</dbReference>
<dbReference type="GO" id="GO:0006334">
    <property type="term" value="P:nucleosome assembly"/>
    <property type="evidence" value="ECO:0000303"/>
    <property type="project" value="ComplexPortal"/>
</dbReference>
<dbReference type="GO" id="GO:1900090">
    <property type="term" value="P:positive regulation of inositol biosynthetic process"/>
    <property type="evidence" value="ECO:0000315"/>
    <property type="project" value="SGD"/>
</dbReference>
<dbReference type="GO" id="GO:2001247">
    <property type="term" value="P:positive regulation of phosphatidylcholine biosynthetic process"/>
    <property type="evidence" value="ECO:0000315"/>
    <property type="project" value="SGD"/>
</dbReference>
<dbReference type="GO" id="GO:1900470">
    <property type="term" value="P:positive regulation of phosphatidylserine biosynthetic process"/>
    <property type="evidence" value="ECO:0000315"/>
    <property type="project" value="SGD"/>
</dbReference>
<dbReference type="GO" id="GO:0045944">
    <property type="term" value="P:positive regulation of transcription by RNA polymerase II"/>
    <property type="evidence" value="ECO:0000315"/>
    <property type="project" value="SGD"/>
</dbReference>
<dbReference type="GO" id="GO:0030174">
    <property type="term" value="P:regulation of DNA-templated DNA replication initiation"/>
    <property type="evidence" value="ECO:0000315"/>
    <property type="project" value="SGD"/>
</dbReference>
<dbReference type="GO" id="GO:0006357">
    <property type="term" value="P:regulation of transcription by RNA polymerase II"/>
    <property type="evidence" value="ECO:0000315"/>
    <property type="project" value="SGD"/>
</dbReference>
<dbReference type="InterPro" id="IPR013907">
    <property type="entry name" value="Sds3"/>
</dbReference>
<dbReference type="PANTHER" id="PTHR21964">
    <property type="entry name" value="BREAST CANCER METASTASIS-SUPPRESSOR 1"/>
    <property type="match status" value="1"/>
</dbReference>
<dbReference type="Pfam" id="PF08598">
    <property type="entry name" value="Sds3"/>
    <property type="match status" value="1"/>
</dbReference>
<dbReference type="SMART" id="SM01401">
    <property type="entry name" value="Sds3"/>
    <property type="match status" value="1"/>
</dbReference>
<evidence type="ECO:0000256" key="1">
    <source>
        <dbReference type="SAM" id="MobiDB-lite"/>
    </source>
</evidence>
<evidence type="ECO:0000269" key="2">
    <source>
    </source>
</evidence>
<evidence type="ECO:0000269" key="3">
    <source>
    </source>
</evidence>
<evidence type="ECO:0000269" key="4">
    <source>
    </source>
</evidence>
<evidence type="ECO:0000305" key="5"/>
<evidence type="ECO:0007744" key="6">
    <source>
    </source>
</evidence>
<evidence type="ECO:0007744" key="7">
    <source>
    </source>
</evidence>
<evidence type="ECO:0007829" key="8">
    <source>
        <dbReference type="PDB" id="8HPO"/>
    </source>
</evidence>
<gene>
    <name type="primary">DEP1</name>
    <name type="synonym">FUN54</name>
    <name type="ordered locus">YAL013W</name>
</gene>
<protein>
    <recommendedName>
        <fullName>Transcriptional regulatory protein DEP1</fullName>
    </recommendedName>
</protein>